<dbReference type="EMBL" id="U03626">
    <property type="protein sequence ID" value="AAC78395.1"/>
    <property type="molecule type" value="mRNA"/>
</dbReference>
<dbReference type="EMBL" id="AF033105">
    <property type="protein sequence ID" value="AAB84302.1"/>
    <property type="molecule type" value="mRNA"/>
</dbReference>
<dbReference type="EMBL" id="AF076512">
    <property type="protein sequence ID" value="AAC27524.1"/>
    <property type="molecule type" value="Genomic_DNA"/>
</dbReference>
<dbReference type="EMBL" id="AF076497">
    <property type="protein sequence ID" value="AAC27524.1"/>
    <property type="status" value="JOINED"/>
    <property type="molecule type" value="Genomic_DNA"/>
</dbReference>
<dbReference type="EMBL" id="AF076498">
    <property type="protein sequence ID" value="AAC27524.1"/>
    <property type="status" value="JOINED"/>
    <property type="molecule type" value="Genomic_DNA"/>
</dbReference>
<dbReference type="EMBL" id="AF076499">
    <property type="protein sequence ID" value="AAC27524.1"/>
    <property type="status" value="JOINED"/>
    <property type="molecule type" value="Genomic_DNA"/>
</dbReference>
<dbReference type="EMBL" id="AF076500">
    <property type="protein sequence ID" value="AAC27524.1"/>
    <property type="status" value="JOINED"/>
    <property type="molecule type" value="Genomic_DNA"/>
</dbReference>
<dbReference type="EMBL" id="AF076501">
    <property type="protein sequence ID" value="AAC27524.1"/>
    <property type="status" value="JOINED"/>
    <property type="molecule type" value="Genomic_DNA"/>
</dbReference>
<dbReference type="EMBL" id="AF076502">
    <property type="protein sequence ID" value="AAC27524.1"/>
    <property type="status" value="JOINED"/>
    <property type="molecule type" value="Genomic_DNA"/>
</dbReference>
<dbReference type="EMBL" id="AF076503">
    <property type="protein sequence ID" value="AAC27524.1"/>
    <property type="status" value="JOINED"/>
    <property type="molecule type" value="Genomic_DNA"/>
</dbReference>
<dbReference type="EMBL" id="AF076504">
    <property type="protein sequence ID" value="AAC27524.1"/>
    <property type="status" value="JOINED"/>
    <property type="molecule type" value="Genomic_DNA"/>
</dbReference>
<dbReference type="EMBL" id="AF076505">
    <property type="protein sequence ID" value="AAC27524.1"/>
    <property type="status" value="JOINED"/>
    <property type="molecule type" value="Genomic_DNA"/>
</dbReference>
<dbReference type="EMBL" id="AF076506">
    <property type="protein sequence ID" value="AAC27524.1"/>
    <property type="status" value="JOINED"/>
    <property type="molecule type" value="Genomic_DNA"/>
</dbReference>
<dbReference type="EMBL" id="AF076507">
    <property type="protein sequence ID" value="AAC27524.1"/>
    <property type="status" value="JOINED"/>
    <property type="molecule type" value="Genomic_DNA"/>
</dbReference>
<dbReference type="EMBL" id="AF076508">
    <property type="protein sequence ID" value="AAC27524.1"/>
    <property type="status" value="JOINED"/>
    <property type="molecule type" value="Genomic_DNA"/>
</dbReference>
<dbReference type="EMBL" id="AF076509">
    <property type="protein sequence ID" value="AAC27524.1"/>
    <property type="status" value="JOINED"/>
    <property type="molecule type" value="Genomic_DNA"/>
</dbReference>
<dbReference type="EMBL" id="AF076510">
    <property type="protein sequence ID" value="AAC27524.1"/>
    <property type="status" value="JOINED"/>
    <property type="molecule type" value="Genomic_DNA"/>
</dbReference>
<dbReference type="EMBL" id="AF076511">
    <property type="protein sequence ID" value="AAC27524.1"/>
    <property type="status" value="JOINED"/>
    <property type="molecule type" value="Genomic_DNA"/>
</dbReference>
<dbReference type="EMBL" id="EU883571">
    <property type="protein sequence ID" value="ACG60645.1"/>
    <property type="molecule type" value="mRNA"/>
</dbReference>
<dbReference type="EMBL" id="CR456849">
    <property type="protein sequence ID" value="CAG33130.1"/>
    <property type="molecule type" value="mRNA"/>
</dbReference>
<dbReference type="EMBL" id="AL357752">
    <property type="status" value="NOT_ANNOTATED_CDS"/>
    <property type="molecule type" value="Genomic_DNA"/>
</dbReference>
<dbReference type="EMBL" id="BC012096">
    <property type="protein sequence ID" value="AAH12096.1"/>
    <property type="molecule type" value="mRNA"/>
</dbReference>
<dbReference type="CCDS" id="CCDS14399.1">
    <molecule id="P36575-1"/>
</dbReference>
<dbReference type="PIR" id="S38943">
    <property type="entry name" value="S38943"/>
</dbReference>
<dbReference type="RefSeq" id="NP_004303.2">
    <molecule id="P36575-1"/>
    <property type="nucleotide sequence ID" value="NM_004312.3"/>
</dbReference>
<dbReference type="SMR" id="P36575"/>
<dbReference type="BioGRID" id="106900">
    <property type="interactions" value="16"/>
</dbReference>
<dbReference type="FunCoup" id="P36575">
    <property type="interactions" value="41"/>
</dbReference>
<dbReference type="IntAct" id="P36575">
    <property type="interactions" value="13"/>
</dbReference>
<dbReference type="MINT" id="P36575"/>
<dbReference type="STRING" id="9606.ENSP00000311538"/>
<dbReference type="PhosphoSitePlus" id="P36575"/>
<dbReference type="BioMuta" id="ARR3"/>
<dbReference type="DMDM" id="93189450"/>
<dbReference type="jPOST" id="P36575"/>
<dbReference type="MassIVE" id="P36575"/>
<dbReference type="PaxDb" id="9606-ENSP00000311538"/>
<dbReference type="PeptideAtlas" id="P36575"/>
<dbReference type="ProteomicsDB" id="55214">
    <molecule id="P36575-1"/>
</dbReference>
<dbReference type="ProteomicsDB" id="55215">
    <molecule id="P36575-2"/>
</dbReference>
<dbReference type="Pumba" id="P36575"/>
<dbReference type="Antibodypedia" id="27367">
    <property type="antibodies" value="239 antibodies from 32 providers"/>
</dbReference>
<dbReference type="DNASU" id="407"/>
<dbReference type="Ensembl" id="ENST00000307959.9">
    <molecule id="P36575-1"/>
    <property type="protein sequence ID" value="ENSP00000311538.8"/>
    <property type="gene ID" value="ENSG00000120500.19"/>
</dbReference>
<dbReference type="Ensembl" id="ENST00000374495.7">
    <molecule id="P36575-2"/>
    <property type="protein sequence ID" value="ENSP00000363619.3"/>
    <property type="gene ID" value="ENSG00000120500.19"/>
</dbReference>
<dbReference type="GeneID" id="407"/>
<dbReference type="KEGG" id="hsa:407"/>
<dbReference type="MANE-Select" id="ENST00000307959.9">
    <property type="protein sequence ID" value="ENSP00000311538.8"/>
    <property type="RefSeq nucleotide sequence ID" value="NM_004312.3"/>
    <property type="RefSeq protein sequence ID" value="NP_004303.2"/>
</dbReference>
<dbReference type="UCSC" id="uc004dya.4">
    <molecule id="P36575-1"/>
    <property type="organism name" value="human"/>
</dbReference>
<dbReference type="AGR" id="HGNC:710"/>
<dbReference type="CTD" id="407"/>
<dbReference type="DisGeNET" id="407"/>
<dbReference type="GeneCards" id="ARR3"/>
<dbReference type="HGNC" id="HGNC:710">
    <property type="gene designation" value="ARR3"/>
</dbReference>
<dbReference type="HPA" id="ENSG00000120500">
    <property type="expression patterns" value="Tissue enriched (retina)"/>
</dbReference>
<dbReference type="MalaCards" id="ARR3"/>
<dbReference type="MIM" id="301010">
    <property type="type" value="phenotype"/>
</dbReference>
<dbReference type="MIM" id="301770">
    <property type="type" value="gene"/>
</dbReference>
<dbReference type="neXtProt" id="NX_P36575"/>
<dbReference type="OpenTargets" id="ENSG00000120500"/>
<dbReference type="PharmGKB" id="PA25004"/>
<dbReference type="VEuPathDB" id="HostDB:ENSG00000120500"/>
<dbReference type="eggNOG" id="KOG3865">
    <property type="taxonomic scope" value="Eukaryota"/>
</dbReference>
<dbReference type="GeneTree" id="ENSGT00950000182887"/>
<dbReference type="HOGENOM" id="CLU_033484_0_0_1"/>
<dbReference type="InParanoid" id="P36575"/>
<dbReference type="OMA" id="NYTKTVC"/>
<dbReference type="OrthoDB" id="298939at2759"/>
<dbReference type="PAN-GO" id="P36575">
    <property type="GO annotations" value="3 GO annotations based on evolutionary models"/>
</dbReference>
<dbReference type="PhylomeDB" id="P36575"/>
<dbReference type="TreeFam" id="TF314260"/>
<dbReference type="PathwayCommons" id="P36575"/>
<dbReference type="SignaLink" id="P36575"/>
<dbReference type="BioGRID-ORCS" id="407">
    <property type="hits" value="9 hits in 764 CRISPR screens"/>
</dbReference>
<dbReference type="ChiTaRS" id="ARR3">
    <property type="organism name" value="human"/>
</dbReference>
<dbReference type="GeneWiki" id="ARR3"/>
<dbReference type="GenomeRNAi" id="407"/>
<dbReference type="Pharos" id="P36575">
    <property type="development level" value="Tbio"/>
</dbReference>
<dbReference type="PRO" id="PR:P36575"/>
<dbReference type="Proteomes" id="UP000005640">
    <property type="component" value="Chromosome X"/>
</dbReference>
<dbReference type="RNAct" id="P36575">
    <property type="molecule type" value="protein"/>
</dbReference>
<dbReference type="Bgee" id="ENSG00000120500">
    <property type="expression patterns" value="Expressed in male germ line stem cell (sensu Vertebrata) in testis and 114 other cell types or tissues"/>
</dbReference>
<dbReference type="ExpressionAtlas" id="P36575">
    <property type="expression patterns" value="baseline and differential"/>
</dbReference>
<dbReference type="GO" id="GO:0005737">
    <property type="term" value="C:cytoplasm"/>
    <property type="evidence" value="ECO:0000304"/>
    <property type="project" value="ProtInc"/>
</dbReference>
<dbReference type="GO" id="GO:0001917">
    <property type="term" value="C:photoreceptor inner segment"/>
    <property type="evidence" value="ECO:0000314"/>
    <property type="project" value="MGI"/>
</dbReference>
<dbReference type="GO" id="GO:0001750">
    <property type="term" value="C:photoreceptor outer segment"/>
    <property type="evidence" value="ECO:0007669"/>
    <property type="project" value="UniProtKB-SubCell"/>
</dbReference>
<dbReference type="GO" id="GO:0045202">
    <property type="term" value="C:synapse"/>
    <property type="evidence" value="ECO:0007669"/>
    <property type="project" value="Ensembl"/>
</dbReference>
<dbReference type="GO" id="GO:0001664">
    <property type="term" value="F:G protein-coupled receptor binding"/>
    <property type="evidence" value="ECO:0000318"/>
    <property type="project" value="GO_Central"/>
</dbReference>
<dbReference type="GO" id="GO:0002046">
    <property type="term" value="F:opsin binding"/>
    <property type="evidence" value="ECO:0007669"/>
    <property type="project" value="Ensembl"/>
</dbReference>
<dbReference type="GO" id="GO:0051219">
    <property type="term" value="F:phosphoprotein binding"/>
    <property type="evidence" value="ECO:0007669"/>
    <property type="project" value="Ensembl"/>
</dbReference>
<dbReference type="GO" id="GO:0002031">
    <property type="term" value="P:G protein-coupled receptor internalization"/>
    <property type="evidence" value="ECO:0000318"/>
    <property type="project" value="GO_Central"/>
</dbReference>
<dbReference type="GO" id="GO:0007165">
    <property type="term" value="P:signal transduction"/>
    <property type="evidence" value="ECO:0000304"/>
    <property type="project" value="ProtInc"/>
</dbReference>
<dbReference type="GO" id="GO:0007601">
    <property type="term" value="P:visual perception"/>
    <property type="evidence" value="ECO:0000318"/>
    <property type="project" value="GO_Central"/>
</dbReference>
<dbReference type="FunFam" id="2.60.40.640:FF:000019">
    <property type="entry name" value="Arrestin 3"/>
    <property type="match status" value="1"/>
</dbReference>
<dbReference type="FunFam" id="2.60.40.840:FF:000002">
    <property type="entry name" value="Arrestin 3"/>
    <property type="match status" value="1"/>
</dbReference>
<dbReference type="Gene3D" id="2.60.40.640">
    <property type="match status" value="1"/>
</dbReference>
<dbReference type="Gene3D" id="2.60.40.840">
    <property type="match status" value="1"/>
</dbReference>
<dbReference type="InterPro" id="IPR000698">
    <property type="entry name" value="Arrestin"/>
</dbReference>
<dbReference type="InterPro" id="IPR014752">
    <property type="entry name" value="Arrestin-like_C"/>
</dbReference>
<dbReference type="InterPro" id="IPR011021">
    <property type="entry name" value="Arrestin-like_N"/>
</dbReference>
<dbReference type="InterPro" id="IPR011022">
    <property type="entry name" value="Arrestin_C-like"/>
</dbReference>
<dbReference type="InterPro" id="IPR017864">
    <property type="entry name" value="Arrestin_CS"/>
</dbReference>
<dbReference type="InterPro" id="IPR014753">
    <property type="entry name" value="Arrestin_N"/>
</dbReference>
<dbReference type="InterPro" id="IPR014756">
    <property type="entry name" value="Ig_E-set"/>
</dbReference>
<dbReference type="PANTHER" id="PTHR11792">
    <property type="entry name" value="ARRESTIN"/>
    <property type="match status" value="1"/>
</dbReference>
<dbReference type="PANTHER" id="PTHR11792:SF19">
    <property type="entry name" value="ARRESTIN-C"/>
    <property type="match status" value="1"/>
</dbReference>
<dbReference type="Pfam" id="PF02752">
    <property type="entry name" value="Arrestin_C"/>
    <property type="match status" value="1"/>
</dbReference>
<dbReference type="Pfam" id="PF00339">
    <property type="entry name" value="Arrestin_N"/>
    <property type="match status" value="1"/>
</dbReference>
<dbReference type="PRINTS" id="PR00309">
    <property type="entry name" value="ARRESTIN"/>
</dbReference>
<dbReference type="SMART" id="SM01017">
    <property type="entry name" value="Arrestin_C"/>
    <property type="match status" value="1"/>
</dbReference>
<dbReference type="SUPFAM" id="SSF81296">
    <property type="entry name" value="E set domains"/>
    <property type="match status" value="2"/>
</dbReference>
<dbReference type="PROSITE" id="PS00295">
    <property type="entry name" value="ARRESTINS"/>
    <property type="match status" value="1"/>
</dbReference>
<reference key="1">
    <citation type="journal article" date="1993" name="FEBS Lett.">
        <title>X-arrestin: a new retinal arrestin mapping to the X chromosome.</title>
        <authorList>
            <person name="Murakami A."/>
            <person name="Yajima T."/>
            <person name="Sakuma H."/>
            <person name="McLaren M.J."/>
            <person name="Inana G."/>
        </authorList>
    </citation>
    <scope>NUCLEOTIDE SEQUENCE [MRNA] (ISOFORM 1)</scope>
    <source>
        <tissue>Retina</tissue>
    </source>
</reference>
<reference key="2">
    <citation type="journal article" date="1994" name="J. Biol. Chem.">
        <title>Cone arrestin identified by targeting expression of a functional family.</title>
        <authorList>
            <person name="Craft C.M."/>
            <person name="Whitmore D.H."/>
            <person name="Wiechmann A.F."/>
        </authorList>
    </citation>
    <scope>NUCLEOTIDE SEQUENCE [MRNA] (ISOFORM 1)</scope>
    <source>
        <tissue>Retina</tissue>
    </source>
</reference>
<reference key="3">
    <citation type="submission" date="1998-11" db="EMBL/GenBank/DDBJ databases">
        <authorList>
            <person name="Craft C.M."/>
        </authorList>
    </citation>
    <scope>SEQUENCE REVISION</scope>
</reference>
<reference key="4">
    <citation type="journal article" date="1996" name="FEBS Lett.">
        <title>Immunolocalization of X-arrestin in human cone photoreceptors.</title>
        <authorList>
            <person name="Sakuma H."/>
            <person name="Inana G."/>
            <person name="Murakami A."/>
            <person name="Higashide T."/>
            <person name="McLaren M.J."/>
        </authorList>
    </citation>
    <scope>NUCLEOTIDE SEQUENCE [MRNA] (ISOFORM 1)</scope>
    <source>
        <tissue>Retina</tissue>
    </source>
</reference>
<reference key="5">
    <citation type="journal article" date="1998" name="Gene">
        <title>Isolation and characterization of the human X-arrestin gene.</title>
        <authorList>
            <person name="Sakuma H."/>
            <person name="Murakami A."/>
            <person name="Fujimaki T."/>
            <person name="Inana G."/>
        </authorList>
    </citation>
    <scope>NUCLEOTIDE SEQUENCE [GENOMIC DNA]</scope>
</reference>
<reference key="6">
    <citation type="submission" date="2008-07" db="EMBL/GenBank/DDBJ databases">
        <title>Isolation of cDNA coding for human arrestin 3, retinal (X-arrestin) ARR3.</title>
        <authorList>
            <person name="Kaighin V.A."/>
            <person name="Martin A.L."/>
            <person name="Aronstam R.S."/>
        </authorList>
    </citation>
    <scope>NUCLEOTIDE SEQUENCE [MRNA] (ISOFORM 1)</scope>
    <source>
        <tissue>Eye</tissue>
    </source>
</reference>
<reference key="7">
    <citation type="submission" date="2004-06" db="EMBL/GenBank/DDBJ databases">
        <title>Cloning of human full open reading frames in Gateway(TM) system entry vector (pDONR201).</title>
        <authorList>
            <person name="Ebert L."/>
            <person name="Schick M."/>
            <person name="Neubert P."/>
            <person name="Schatten R."/>
            <person name="Henze S."/>
            <person name="Korn B."/>
        </authorList>
    </citation>
    <scope>NUCLEOTIDE SEQUENCE [LARGE SCALE MRNA] (ISOFORM 1)</scope>
</reference>
<reference key="8">
    <citation type="journal article" date="2005" name="Nature">
        <title>The DNA sequence of the human X chromosome.</title>
        <authorList>
            <person name="Ross M.T."/>
            <person name="Grafham D.V."/>
            <person name="Coffey A.J."/>
            <person name="Scherer S."/>
            <person name="McLay K."/>
            <person name="Muzny D."/>
            <person name="Platzer M."/>
            <person name="Howell G.R."/>
            <person name="Burrows C."/>
            <person name="Bird C.P."/>
            <person name="Frankish A."/>
            <person name="Lovell F.L."/>
            <person name="Howe K.L."/>
            <person name="Ashurst J.L."/>
            <person name="Fulton R.S."/>
            <person name="Sudbrak R."/>
            <person name="Wen G."/>
            <person name="Jones M.C."/>
            <person name="Hurles M.E."/>
            <person name="Andrews T.D."/>
            <person name="Scott C.E."/>
            <person name="Searle S."/>
            <person name="Ramser J."/>
            <person name="Whittaker A."/>
            <person name="Deadman R."/>
            <person name="Carter N.P."/>
            <person name="Hunt S.E."/>
            <person name="Chen R."/>
            <person name="Cree A."/>
            <person name="Gunaratne P."/>
            <person name="Havlak P."/>
            <person name="Hodgson A."/>
            <person name="Metzker M.L."/>
            <person name="Richards S."/>
            <person name="Scott G."/>
            <person name="Steffen D."/>
            <person name="Sodergren E."/>
            <person name="Wheeler D.A."/>
            <person name="Worley K.C."/>
            <person name="Ainscough R."/>
            <person name="Ambrose K.D."/>
            <person name="Ansari-Lari M.A."/>
            <person name="Aradhya S."/>
            <person name="Ashwell R.I."/>
            <person name="Babbage A.K."/>
            <person name="Bagguley C.L."/>
            <person name="Ballabio A."/>
            <person name="Banerjee R."/>
            <person name="Barker G.E."/>
            <person name="Barlow K.F."/>
            <person name="Barrett I.P."/>
            <person name="Bates K.N."/>
            <person name="Beare D.M."/>
            <person name="Beasley H."/>
            <person name="Beasley O."/>
            <person name="Beck A."/>
            <person name="Bethel G."/>
            <person name="Blechschmidt K."/>
            <person name="Brady N."/>
            <person name="Bray-Allen S."/>
            <person name="Bridgeman A.M."/>
            <person name="Brown A.J."/>
            <person name="Brown M.J."/>
            <person name="Bonnin D."/>
            <person name="Bruford E.A."/>
            <person name="Buhay C."/>
            <person name="Burch P."/>
            <person name="Burford D."/>
            <person name="Burgess J."/>
            <person name="Burrill W."/>
            <person name="Burton J."/>
            <person name="Bye J.M."/>
            <person name="Carder C."/>
            <person name="Carrel L."/>
            <person name="Chako J."/>
            <person name="Chapman J.C."/>
            <person name="Chavez D."/>
            <person name="Chen E."/>
            <person name="Chen G."/>
            <person name="Chen Y."/>
            <person name="Chen Z."/>
            <person name="Chinault C."/>
            <person name="Ciccodicola A."/>
            <person name="Clark S.Y."/>
            <person name="Clarke G."/>
            <person name="Clee C.M."/>
            <person name="Clegg S."/>
            <person name="Clerc-Blankenburg K."/>
            <person name="Clifford K."/>
            <person name="Cobley V."/>
            <person name="Cole C.G."/>
            <person name="Conquer J.S."/>
            <person name="Corby N."/>
            <person name="Connor R.E."/>
            <person name="David R."/>
            <person name="Davies J."/>
            <person name="Davis C."/>
            <person name="Davis J."/>
            <person name="Delgado O."/>
            <person name="Deshazo D."/>
            <person name="Dhami P."/>
            <person name="Ding Y."/>
            <person name="Dinh H."/>
            <person name="Dodsworth S."/>
            <person name="Draper H."/>
            <person name="Dugan-Rocha S."/>
            <person name="Dunham A."/>
            <person name="Dunn M."/>
            <person name="Durbin K.J."/>
            <person name="Dutta I."/>
            <person name="Eades T."/>
            <person name="Ellwood M."/>
            <person name="Emery-Cohen A."/>
            <person name="Errington H."/>
            <person name="Evans K.L."/>
            <person name="Faulkner L."/>
            <person name="Francis F."/>
            <person name="Frankland J."/>
            <person name="Fraser A.E."/>
            <person name="Galgoczy P."/>
            <person name="Gilbert J."/>
            <person name="Gill R."/>
            <person name="Gloeckner G."/>
            <person name="Gregory S.G."/>
            <person name="Gribble S."/>
            <person name="Griffiths C."/>
            <person name="Grocock R."/>
            <person name="Gu Y."/>
            <person name="Gwilliam R."/>
            <person name="Hamilton C."/>
            <person name="Hart E.A."/>
            <person name="Hawes A."/>
            <person name="Heath P.D."/>
            <person name="Heitmann K."/>
            <person name="Hennig S."/>
            <person name="Hernandez J."/>
            <person name="Hinzmann B."/>
            <person name="Ho S."/>
            <person name="Hoffs M."/>
            <person name="Howden P.J."/>
            <person name="Huckle E.J."/>
            <person name="Hume J."/>
            <person name="Hunt P.J."/>
            <person name="Hunt A.R."/>
            <person name="Isherwood J."/>
            <person name="Jacob L."/>
            <person name="Johnson D."/>
            <person name="Jones S."/>
            <person name="de Jong P.J."/>
            <person name="Joseph S.S."/>
            <person name="Keenan S."/>
            <person name="Kelly S."/>
            <person name="Kershaw J.K."/>
            <person name="Khan Z."/>
            <person name="Kioschis P."/>
            <person name="Klages S."/>
            <person name="Knights A.J."/>
            <person name="Kosiura A."/>
            <person name="Kovar-Smith C."/>
            <person name="Laird G.K."/>
            <person name="Langford C."/>
            <person name="Lawlor S."/>
            <person name="Leversha M."/>
            <person name="Lewis L."/>
            <person name="Liu W."/>
            <person name="Lloyd C."/>
            <person name="Lloyd D.M."/>
            <person name="Loulseged H."/>
            <person name="Loveland J.E."/>
            <person name="Lovell J.D."/>
            <person name="Lozado R."/>
            <person name="Lu J."/>
            <person name="Lyne R."/>
            <person name="Ma J."/>
            <person name="Maheshwari M."/>
            <person name="Matthews L.H."/>
            <person name="McDowall J."/>
            <person name="McLaren S."/>
            <person name="McMurray A."/>
            <person name="Meidl P."/>
            <person name="Meitinger T."/>
            <person name="Milne S."/>
            <person name="Miner G."/>
            <person name="Mistry S.L."/>
            <person name="Morgan M."/>
            <person name="Morris S."/>
            <person name="Mueller I."/>
            <person name="Mullikin J.C."/>
            <person name="Nguyen N."/>
            <person name="Nordsiek G."/>
            <person name="Nyakatura G."/>
            <person name="O'dell C.N."/>
            <person name="Okwuonu G."/>
            <person name="Palmer S."/>
            <person name="Pandian R."/>
            <person name="Parker D."/>
            <person name="Parrish J."/>
            <person name="Pasternak S."/>
            <person name="Patel D."/>
            <person name="Pearce A.V."/>
            <person name="Pearson D.M."/>
            <person name="Pelan S.E."/>
            <person name="Perez L."/>
            <person name="Porter K.M."/>
            <person name="Ramsey Y."/>
            <person name="Reichwald K."/>
            <person name="Rhodes S."/>
            <person name="Ridler K.A."/>
            <person name="Schlessinger D."/>
            <person name="Schueler M.G."/>
            <person name="Sehra H.K."/>
            <person name="Shaw-Smith C."/>
            <person name="Shen H."/>
            <person name="Sheridan E.M."/>
            <person name="Shownkeen R."/>
            <person name="Skuce C.D."/>
            <person name="Smith M.L."/>
            <person name="Sotheran E.C."/>
            <person name="Steingruber H.E."/>
            <person name="Steward C.A."/>
            <person name="Storey R."/>
            <person name="Swann R.M."/>
            <person name="Swarbreck D."/>
            <person name="Tabor P.E."/>
            <person name="Taudien S."/>
            <person name="Taylor T."/>
            <person name="Teague B."/>
            <person name="Thomas K."/>
            <person name="Thorpe A."/>
            <person name="Timms K."/>
            <person name="Tracey A."/>
            <person name="Trevanion S."/>
            <person name="Tromans A.C."/>
            <person name="d'Urso M."/>
            <person name="Verduzco D."/>
            <person name="Villasana D."/>
            <person name="Waldron L."/>
            <person name="Wall M."/>
            <person name="Wang Q."/>
            <person name="Warren J."/>
            <person name="Warry G.L."/>
            <person name="Wei X."/>
            <person name="West A."/>
            <person name="Whitehead S.L."/>
            <person name="Whiteley M.N."/>
            <person name="Wilkinson J.E."/>
            <person name="Willey D.L."/>
            <person name="Williams G."/>
            <person name="Williams L."/>
            <person name="Williamson A."/>
            <person name="Williamson H."/>
            <person name="Wilming L."/>
            <person name="Woodmansey R.L."/>
            <person name="Wray P.W."/>
            <person name="Yen J."/>
            <person name="Zhang J."/>
            <person name="Zhou J."/>
            <person name="Zoghbi H."/>
            <person name="Zorilla S."/>
            <person name="Buck D."/>
            <person name="Reinhardt R."/>
            <person name="Poustka A."/>
            <person name="Rosenthal A."/>
            <person name="Lehrach H."/>
            <person name="Meindl A."/>
            <person name="Minx P.J."/>
            <person name="Hillier L.W."/>
            <person name="Willard H.F."/>
            <person name="Wilson R.K."/>
            <person name="Waterston R.H."/>
            <person name="Rice C.M."/>
            <person name="Vaudin M."/>
            <person name="Coulson A."/>
            <person name="Nelson D.L."/>
            <person name="Weinstock G."/>
            <person name="Sulston J.E."/>
            <person name="Durbin R.M."/>
            <person name="Hubbard T."/>
            <person name="Gibbs R.A."/>
            <person name="Beck S."/>
            <person name="Rogers J."/>
            <person name="Bentley D.R."/>
        </authorList>
    </citation>
    <scope>NUCLEOTIDE SEQUENCE [LARGE SCALE GENOMIC DNA]</scope>
</reference>
<reference key="9">
    <citation type="journal article" date="2004" name="Genome Res.">
        <title>The status, quality, and expansion of the NIH full-length cDNA project: the Mammalian Gene Collection (MGC).</title>
        <authorList>
            <consortium name="The MGC Project Team"/>
        </authorList>
    </citation>
    <scope>NUCLEOTIDE SEQUENCE [LARGE SCALE MRNA] (ISOFORM 2)</scope>
    <scope>VARIANT PHE-44</scope>
    <source>
        <tissue>Eye</tissue>
    </source>
</reference>
<reference key="10">
    <citation type="journal article" date="2010" name="J. Biol. Chem.">
        <title>Site-specific phosphorylation of CXCR4 is dynamically regulated by multiple kinases and results in differential modulation of CXCR4 signaling.</title>
        <authorList>
            <person name="Busillo J.M."/>
            <person name="Armando S."/>
            <person name="Sengupta R."/>
            <person name="Meucci O."/>
            <person name="Bouvier M."/>
            <person name="Benovic J.L."/>
        </authorList>
    </citation>
    <scope>INTERACTION WITH CXCR4</scope>
</reference>
<reference key="11">
    <citation type="journal article" date="2022" name="J. Biol. Chem.">
        <title>Selective phosphorylation of threonine residues defines GPR84-arrestin interactions of biased ligands.</title>
        <authorList>
            <person name="Marsango S."/>
            <person name="Ward R.J."/>
            <person name="Jenkins L."/>
            <person name="Butcher A.J."/>
            <person name="Al Mahmud Z."/>
            <person name="Dwomoh L."/>
            <person name="Nagel F."/>
            <person name="Schulz S."/>
            <person name="Tikhonova I.G."/>
            <person name="Tobin A.B."/>
            <person name="Milligan G."/>
        </authorList>
    </citation>
    <scope>INTERACTION WITH GPR84</scope>
</reference>
<reference key="12">
    <citation type="journal article" date="2016" name="Mol. Vis.">
        <title>cause female-limited early onset high myopia.</title>
        <authorList>
            <person name="Xiao X."/>
            <person name="Li S."/>
            <person name="Jia X."/>
            <person name="Guo X."/>
            <person name="Zhang Q."/>
        </authorList>
    </citation>
    <scope>INVOLVEMENT IN MYP26</scope>
    <scope>VARIANTS MYP26 PRO-80; 100-ARG--SER-388 DEL AND ASP-298</scope>
</reference>
<organism>
    <name type="scientific">Homo sapiens</name>
    <name type="common">Human</name>
    <dbReference type="NCBI Taxonomy" id="9606"/>
    <lineage>
        <taxon>Eukaryota</taxon>
        <taxon>Metazoa</taxon>
        <taxon>Chordata</taxon>
        <taxon>Craniata</taxon>
        <taxon>Vertebrata</taxon>
        <taxon>Euteleostomi</taxon>
        <taxon>Mammalia</taxon>
        <taxon>Eutheria</taxon>
        <taxon>Euarchontoglires</taxon>
        <taxon>Primates</taxon>
        <taxon>Haplorrhini</taxon>
        <taxon>Catarrhini</taxon>
        <taxon>Hominidae</taxon>
        <taxon>Homo</taxon>
    </lineage>
</organism>
<evidence type="ECO:0000250" key="1">
    <source>
        <dbReference type="UniProtKB" id="Q9EQP6"/>
    </source>
</evidence>
<evidence type="ECO:0000250" key="2">
    <source>
        <dbReference type="UniProtKB" id="Q9N0H5"/>
    </source>
</evidence>
<evidence type="ECO:0000269" key="3">
    <source>
    </source>
</evidence>
<evidence type="ECO:0000269" key="4">
    <source>
    </source>
</evidence>
<evidence type="ECO:0000269" key="5">
    <source>
    </source>
</evidence>
<evidence type="ECO:0000269" key="6">
    <source>
    </source>
</evidence>
<evidence type="ECO:0000303" key="7">
    <source>
    </source>
</evidence>
<evidence type="ECO:0000305" key="8"/>
<name>ARRC_HUMAN</name>
<gene>
    <name type="primary">ARR3</name>
    <name type="synonym">ARRX</name>
    <name type="synonym">CAR</name>
</gene>
<accession>P36575</accession>
<accession>B5B0B9</accession>
<accession>Q5JT23</accession>
<accession>Q5JT24</accession>
<accession>Q6IBF5</accession>
<accession>Q96EN2</accession>
<protein>
    <recommendedName>
        <fullName>Arrestin-C</fullName>
    </recommendedName>
    <alternativeName>
        <fullName>Cone arrestin</fullName>
        <shortName>C-arrestin</shortName>
        <shortName>cArr</shortName>
    </alternativeName>
    <alternativeName>
        <fullName>Retinal cone arrestin-3</fullName>
    </alternativeName>
    <alternativeName>
        <fullName>X-arrestin</fullName>
    </alternativeName>
</protein>
<proteinExistence type="evidence at protein level"/>
<keyword id="KW-0025">Alternative splicing</keyword>
<keyword id="KW-0966">Cell projection</keyword>
<keyword id="KW-0225">Disease variant</keyword>
<keyword id="KW-1015">Disulfide bond</keyword>
<keyword id="KW-1267">Proteomics identification</keyword>
<keyword id="KW-1185">Reference proteome</keyword>
<keyword id="KW-0716">Sensory transduction</keyword>
<keyword id="KW-0844">Vision</keyword>
<sequence>MSKVFKKTSSNGKLSIYLGKRDFVDHVDTVEPIDGVVLVDPEYLKCRKLFVMLTCAFRYGRDDLEVIGLTFRKDLYVQTLQVVPAESSSPQGPLTVLQERLLHKLGDNAYPFTLQMVTNLPCSVTLQPGPEDAGKPCGIDFEVKSFCAENPEETVSKRDYVRLVVRKVQFAPPEAGPGPSAQTIRRFLLSAQPLQLQAWMDREVHYHGEPISVNVSINNCTNKVIKKIKISVDQITDVVLYSLDKYTKTVFIQEFTETVAANSSFSQSFAVTPILAASCQKRGLALDGKLKHEDTNLASSTIIRPGMDKELLGILVSYKVRVNLMVSCGGILGDLTASDVGVELPLVLIHPKPSHEAASSEDIVIEEFTRKGEEESQKAVEAEGDEGS</sequence>
<comment type="function">
    <text>May play a role in an as yet undefined retina-specific signal transduction. Could bind to photoactivated-phosphorylated red/green opsins.</text>
</comment>
<comment type="subunit">
    <text evidence="2 4 6">Homodimer; disulfide-linked in response to retinal illumination (By similarity). Interacts with CXCR4; the interaction is dependent on the C-terminal phosphorylation of CXCR4 and modulates the calcium ion mobilization activity of CXCR4 (PubMed:20048153). Interacts with GPR84 (PubMed:35427647).</text>
</comment>
<comment type="interaction">
    <interactant intactId="EBI-718116">
        <id>P36575</id>
    </interactant>
    <interactant intactId="EBI-746202">
        <id>O00444</id>
        <label>PLK4</label>
    </interactant>
    <organismsDiffer>false</organismsDiffer>
    <experiments>3</experiments>
</comment>
<comment type="interaction">
    <interactant intactId="EBI-718116">
        <id>P36575</id>
    </interactant>
    <interactant intactId="EBI-740718">
        <id>O43298</id>
        <label>ZBTB43</label>
    </interactant>
    <organismsDiffer>false</organismsDiffer>
    <experiments>3</experiments>
</comment>
<comment type="interaction">
    <interactant intactId="EBI-718116">
        <id>P36575</id>
    </interactant>
    <interactant intactId="EBI-743906">
        <id>Q96IT1</id>
        <label>ZNF496</label>
    </interactant>
    <organismsDiffer>false</organismsDiffer>
    <experiments>6</experiments>
</comment>
<comment type="interaction">
    <interactant intactId="EBI-11977533">
        <id>P36575-2</id>
    </interactant>
    <interactant intactId="EBI-14061946">
        <id>Q5T0T0</id>
        <label>MARCHF8</label>
    </interactant>
    <organismsDiffer>false</organismsDiffer>
    <experiments>3</experiments>
</comment>
<comment type="interaction">
    <interactant intactId="EBI-11977533">
        <id>P36575-2</id>
    </interactant>
    <interactant intactId="EBI-743906">
        <id>Q96IT1</id>
        <label>ZNF496</label>
    </interactant>
    <organismsDiffer>false</organismsDiffer>
    <experiments>3</experiments>
</comment>
<comment type="subcellular location">
    <subcellularLocation>
        <location evidence="1">Photoreceptor inner segment</location>
    </subcellularLocation>
    <subcellularLocation>
        <location evidence="1">Cell projection</location>
        <location evidence="1">Cilium</location>
        <location evidence="1">Photoreceptor outer segment</location>
    </subcellularLocation>
</comment>
<comment type="alternative products">
    <event type="alternative splicing"/>
    <isoform>
        <id>P36575-1</id>
        <name>1</name>
        <sequence type="displayed"/>
    </isoform>
    <isoform>
        <id>P36575-2</id>
        <name>2</name>
        <sequence type="described" ref="VSP_017495"/>
    </isoform>
</comment>
<comment type="tissue specificity">
    <text>Inner and outer segments, and the inner plexiform regions of the retina.</text>
</comment>
<comment type="disease" evidence="5">
    <disease id="DI-05150">
        <name>Myopia 26, X-linked, female-limited</name>
        <acronym>MYP26</acronym>
        <description>A form of myopia, a refractive error of the eye, in which parallel rays from a distant object come to focus in front of the retina, vision being better for near objects than for far. MYP26 is characterized by typical tigroid fundus changes commonly seen in early onset high myopia, and an unusual pattern of X-linked female-limited inheritance.</description>
        <dbReference type="MIM" id="301010"/>
    </disease>
    <text>The disease may be caused by variants affecting the gene represented in this entry.</text>
</comment>
<comment type="similarity">
    <text evidence="8">Belongs to the arrestin family.</text>
</comment>
<feature type="chain" id="PRO_0000205203" description="Arrestin-C">
    <location>
        <begin position="1"/>
        <end position="388"/>
    </location>
</feature>
<feature type="splice variant" id="VSP_017495" description="In isoform 2." evidence="7">
    <original>SSEDIVIEEFTRKGEEESQKAVEAEGDEGS</original>
    <variation>R</variation>
    <location>
        <begin position="359"/>
        <end position="388"/>
    </location>
</feature>
<feature type="sequence variant" id="VAR_025520" description="In dbSNP:rs11548182." evidence="3">
    <original>L</original>
    <variation>F</variation>
    <location>
        <position position="44"/>
    </location>
</feature>
<feature type="sequence variant" id="VAR_080595" description="In MYP26; uncertain significance; dbSNP:rs1555941116." evidence="5">
    <original>L</original>
    <variation>P</variation>
    <location>
        <position position="80"/>
    </location>
</feature>
<feature type="sequence variant" id="VAR_080596" description="In MYP26; uncertain significance." evidence="5">
    <location>
        <begin position="100"/>
        <end position="388"/>
    </location>
</feature>
<feature type="sequence variant" id="VAR_080597" description="In MYP26; uncertain significance; dbSNP:rs765658563." evidence="5">
    <original>A</original>
    <variation>D</variation>
    <location>
        <position position="298"/>
    </location>
</feature>
<feature type="sequence conflict" description="In Ref. 7; CAG33130." evidence="8" ref="7">
    <original>G</original>
    <variation>V</variation>
    <location>
        <position position="19"/>
    </location>
</feature>
<feature type="sequence conflict" description="In Ref. 1; no nucleotide entry and 4; AAB84302/AAC27524." evidence="8" ref="1 4">
    <original>P</original>
    <variation>A</variation>
    <location>
        <position position="93"/>
    </location>
</feature>
<feature type="sequence conflict" description="In Ref. 2; AAC78395." evidence="8" ref="2">
    <original>I</original>
    <variation>V</variation>
    <location>
        <position position="217"/>
    </location>
</feature>
<feature type="sequence conflict" description="In Ref. 8; AL357752." evidence="8" ref="8">
    <original>EA</original>
    <variation>AS</variation>
    <location>
        <begin position="356"/>
        <end position="357"/>
    </location>
</feature>